<reference key="1">
    <citation type="journal article" date="2009" name="Genome Res.">
        <title>Comparative genomics of protoploid Saccharomycetaceae.</title>
        <authorList>
            <consortium name="The Genolevures Consortium"/>
            <person name="Souciet J.-L."/>
            <person name="Dujon B."/>
            <person name="Gaillardin C."/>
            <person name="Johnston M."/>
            <person name="Baret P.V."/>
            <person name="Cliften P."/>
            <person name="Sherman D.J."/>
            <person name="Weissenbach J."/>
            <person name="Westhof E."/>
            <person name="Wincker P."/>
            <person name="Jubin C."/>
            <person name="Poulain J."/>
            <person name="Barbe V."/>
            <person name="Segurens B."/>
            <person name="Artiguenave F."/>
            <person name="Anthouard V."/>
            <person name="Vacherie B."/>
            <person name="Val M.-E."/>
            <person name="Fulton R.S."/>
            <person name="Minx P."/>
            <person name="Wilson R."/>
            <person name="Durrens P."/>
            <person name="Jean G."/>
            <person name="Marck C."/>
            <person name="Martin T."/>
            <person name="Nikolski M."/>
            <person name="Rolland T."/>
            <person name="Seret M.-L."/>
            <person name="Casaregola S."/>
            <person name="Despons L."/>
            <person name="Fairhead C."/>
            <person name="Fischer G."/>
            <person name="Lafontaine I."/>
            <person name="Leh V."/>
            <person name="Lemaire M."/>
            <person name="de Montigny J."/>
            <person name="Neuveglise C."/>
            <person name="Thierry A."/>
            <person name="Blanc-Lenfle I."/>
            <person name="Bleykasten C."/>
            <person name="Diffels J."/>
            <person name="Fritsch E."/>
            <person name="Frangeul L."/>
            <person name="Goeffon A."/>
            <person name="Jauniaux N."/>
            <person name="Kachouri-Lafond R."/>
            <person name="Payen C."/>
            <person name="Potier S."/>
            <person name="Pribylova L."/>
            <person name="Ozanne C."/>
            <person name="Richard G.-F."/>
            <person name="Sacerdot C."/>
            <person name="Straub M.-L."/>
            <person name="Talla E."/>
        </authorList>
    </citation>
    <scope>NUCLEOTIDE SEQUENCE [LARGE SCALE GENOMIC DNA]</scope>
    <source>
        <strain>ATCC 2623 / CBS 732 / BCRC 21506 / NBRC 1130 / NCYC 568 / NRRL Y-229</strain>
    </source>
</reference>
<gene>
    <name type="primary">SPC110</name>
    <name type="ordered locus">ZYRO0F09570g</name>
</gene>
<sequence>MADAPDHSLNGRRHLEFTPIGYSRQNPLKRLSRSPIQTVAEDDNNGNGMSEEGPFKKQRRADLDDTIASHRMFNDSSQFDDTLPQLNGQSADNDNDNAHDSGKETDDVVKNLMGNLKENAPASNPLKEQQEQLHKLNTDNYNLRLKCNSLLKFLHNVTDQGELTKSLGLLDEIHEWKQKHYTLNQQYLELKAKLIQVEANAAENKQEPVTEVDHTACQRELSYVQNQLEKTTLQLNTYRDEVAHLEDKTIRIQEDQRAKEEQHQLEIQMLRSDVNNLNVSLVNKESELEEDRAKIQRLMNQLHEFDHKGSQSLLDLERQLEMKRDSISSLEKEVRALTHDRVHLETRIKDREIENAKIQSELERLRDNVKNNNSSNFEIGELKHAKASLDDKVRNLTEERHNLNQRISALRKECDEWKSKYQRNESLDSNHRKAFDSLRQELQTTKTQLEETRKTAQQLQTQVIENTTKNSERTSQRIKDKETQIQKLESELQFCKQQLKDGSRRLQAEEERCRETFESELQNLEMKNGFERTKLEREITLLKEERVALIETHDRELELWKSKCDALNKENDILVRQEIGDLDGVKRKLSQQLDKLQEKLTTAEGERGDLAEKLIKLQHSKDSYKDELKRVSSKLEYLSKEYLKSKQSAINDDEQKTKYNTMKQRLLVELKSLQDENLSLERKLLEQRGSSSRSQESSSRSSSTTQDRLDYYKLKYNNEVKHNNDLRIMNDYLNRVLRASSQHLKLDLLKLESEISQPAVPSSRTYKTVLDDDRYRPRFRSGLISPGHIPTFKAVALLVLACVRMKQTAVRCRWDEHRIRYLRNKMAIDDDRITW</sequence>
<protein>
    <recommendedName>
        <fullName>Spindle pole body component 110</fullName>
    </recommendedName>
    <alternativeName>
        <fullName>Spindle pole body spacer protein SPC110</fullName>
    </alternativeName>
</protein>
<dbReference type="EMBL" id="CU928178">
    <property type="protein sequence ID" value="CAR28680.1"/>
    <property type="molecule type" value="Genomic_DNA"/>
</dbReference>
<dbReference type="RefSeq" id="XP_002497613.1">
    <property type="nucleotide sequence ID" value="XM_002497568.1"/>
</dbReference>
<dbReference type="SMR" id="C5DY19"/>
<dbReference type="FunCoup" id="C5DY19">
    <property type="interactions" value="349"/>
</dbReference>
<dbReference type="GeneID" id="8205377"/>
<dbReference type="KEGG" id="zro:ZYRO0F09570g"/>
<dbReference type="HOGENOM" id="CLU_329279_0_0_1"/>
<dbReference type="InParanoid" id="C5DY19"/>
<dbReference type="Proteomes" id="UP000008536">
    <property type="component" value="Chromosome F"/>
</dbReference>
<dbReference type="GO" id="GO:0005737">
    <property type="term" value="C:cytoplasm"/>
    <property type="evidence" value="ECO:0007669"/>
    <property type="project" value="UniProtKB-KW"/>
</dbReference>
<dbReference type="GO" id="GO:0005634">
    <property type="term" value="C:nucleus"/>
    <property type="evidence" value="ECO:0007669"/>
    <property type="project" value="UniProtKB-SubCell"/>
</dbReference>
<dbReference type="GO" id="GO:0005816">
    <property type="term" value="C:spindle pole body"/>
    <property type="evidence" value="ECO:0007669"/>
    <property type="project" value="UniProtKB-SubCell"/>
</dbReference>
<dbReference type="Gene3D" id="1.10.287.1490">
    <property type="match status" value="1"/>
</dbReference>
<dbReference type="Gene3D" id="6.10.310.10">
    <property type="match status" value="1"/>
</dbReference>
<dbReference type="InterPro" id="IPR040593">
    <property type="entry name" value="Spc110_C"/>
</dbReference>
<dbReference type="Pfam" id="PF18520">
    <property type="entry name" value="Spc110_C"/>
    <property type="match status" value="1"/>
</dbReference>
<organism>
    <name type="scientific">Zygosaccharomyces rouxii (strain ATCC 2623 / CBS 732 / NBRC 1130 / NCYC 568 / NRRL Y-229)</name>
    <dbReference type="NCBI Taxonomy" id="559307"/>
    <lineage>
        <taxon>Eukaryota</taxon>
        <taxon>Fungi</taxon>
        <taxon>Dikarya</taxon>
        <taxon>Ascomycota</taxon>
        <taxon>Saccharomycotina</taxon>
        <taxon>Saccharomycetes</taxon>
        <taxon>Saccharomycetales</taxon>
        <taxon>Saccharomycetaceae</taxon>
        <taxon>Zygosaccharomyces</taxon>
    </lineage>
</organism>
<proteinExistence type="inferred from homology"/>
<evidence type="ECO:0000250" key="1"/>
<evidence type="ECO:0000255" key="2"/>
<evidence type="ECO:0000256" key="3">
    <source>
        <dbReference type="SAM" id="MobiDB-lite"/>
    </source>
</evidence>
<evidence type="ECO:0000305" key="4"/>
<comment type="function">
    <text evidence="1">Component of the spindle pole body (SPB) required for the proper execution of spindle pole body (SPB) duplication. Potential role in cross-linking filaments or anchoring other molecules. It is essential for growth (By similarity).</text>
</comment>
<comment type="subunit">
    <text evidence="1">Homodimer.</text>
</comment>
<comment type="subcellular location">
    <subcellularLocation>
        <location evidence="1">Nucleus</location>
    </subcellularLocation>
    <subcellularLocation>
        <location evidence="1">Cytoplasm</location>
        <location evidence="1">Cytoskeleton</location>
        <location evidence="1">Microtubule organizing center</location>
        <location evidence="1">Spindle pole body</location>
    </subcellularLocation>
    <text evidence="1">Tightly associated with the nucleus. It is present in a granular pattern that excludes the nucleolus.</text>
</comment>
<comment type="similarity">
    <text evidence="4">Belongs to the SPC110 family.</text>
</comment>
<accession>C5DY19</accession>
<keyword id="KW-0175">Coiled coil</keyword>
<keyword id="KW-0963">Cytoplasm</keyword>
<keyword id="KW-0206">Cytoskeleton</keyword>
<keyword id="KW-0539">Nucleus</keyword>
<keyword id="KW-1185">Reference proteome</keyword>
<feature type="chain" id="PRO_0000409206" description="Spindle pole body component 110">
    <location>
        <begin position="1"/>
        <end position="835"/>
    </location>
</feature>
<feature type="region of interest" description="Disordered" evidence="3">
    <location>
        <begin position="1"/>
        <end position="59"/>
    </location>
</feature>
<feature type="region of interest" description="Disordered" evidence="3">
    <location>
        <begin position="73"/>
        <end position="105"/>
    </location>
</feature>
<feature type="region of interest" description="Disordered" evidence="3">
    <location>
        <begin position="685"/>
        <end position="706"/>
    </location>
</feature>
<feature type="coiled-coil region" evidence="2">
    <location>
        <begin position="182"/>
        <end position="690"/>
    </location>
</feature>
<feature type="compositionally biased region" description="Polar residues" evidence="3">
    <location>
        <begin position="74"/>
        <end position="91"/>
    </location>
</feature>
<feature type="compositionally biased region" description="Basic and acidic residues" evidence="3">
    <location>
        <begin position="96"/>
        <end position="105"/>
    </location>
</feature>
<feature type="compositionally biased region" description="Low complexity" evidence="3">
    <location>
        <begin position="687"/>
        <end position="703"/>
    </location>
</feature>
<name>SP110_ZYGRC</name>